<dbReference type="EC" id="4.1.1.37" evidence="1"/>
<dbReference type="EMBL" id="CP000813">
    <property type="protein sequence ID" value="ABV61642.1"/>
    <property type="molecule type" value="Genomic_DNA"/>
</dbReference>
<dbReference type="RefSeq" id="WP_012009461.1">
    <property type="nucleotide sequence ID" value="NZ_VEIS01000007.1"/>
</dbReference>
<dbReference type="SMR" id="A8FBM5"/>
<dbReference type="STRING" id="315750.BPUM_0958"/>
<dbReference type="GeneID" id="5620222"/>
<dbReference type="KEGG" id="bpu:BPUM_0958"/>
<dbReference type="eggNOG" id="COG0407">
    <property type="taxonomic scope" value="Bacteria"/>
</dbReference>
<dbReference type="HOGENOM" id="CLU_040933_0_1_9"/>
<dbReference type="OrthoDB" id="9806656at2"/>
<dbReference type="UniPathway" id="UPA00251">
    <property type="reaction ID" value="UER00321"/>
</dbReference>
<dbReference type="Proteomes" id="UP000001355">
    <property type="component" value="Chromosome"/>
</dbReference>
<dbReference type="GO" id="GO:0005829">
    <property type="term" value="C:cytosol"/>
    <property type="evidence" value="ECO:0007669"/>
    <property type="project" value="TreeGrafter"/>
</dbReference>
<dbReference type="GO" id="GO:0004853">
    <property type="term" value="F:uroporphyrinogen decarboxylase activity"/>
    <property type="evidence" value="ECO:0007669"/>
    <property type="project" value="UniProtKB-UniRule"/>
</dbReference>
<dbReference type="GO" id="GO:0006782">
    <property type="term" value="P:protoporphyrinogen IX biosynthetic process"/>
    <property type="evidence" value="ECO:0007669"/>
    <property type="project" value="UniProtKB-UniRule"/>
</dbReference>
<dbReference type="CDD" id="cd00717">
    <property type="entry name" value="URO-D"/>
    <property type="match status" value="1"/>
</dbReference>
<dbReference type="FunFam" id="3.20.20.210:FF:000005">
    <property type="entry name" value="Uroporphyrinogen decarboxylase"/>
    <property type="match status" value="1"/>
</dbReference>
<dbReference type="Gene3D" id="3.20.20.210">
    <property type="match status" value="1"/>
</dbReference>
<dbReference type="HAMAP" id="MF_00218">
    <property type="entry name" value="URO_D"/>
    <property type="match status" value="1"/>
</dbReference>
<dbReference type="InterPro" id="IPR038071">
    <property type="entry name" value="UROD/MetE-like_sf"/>
</dbReference>
<dbReference type="InterPro" id="IPR006361">
    <property type="entry name" value="Uroporphyrinogen_deCO2ase_HemE"/>
</dbReference>
<dbReference type="InterPro" id="IPR000257">
    <property type="entry name" value="Uroporphyrinogen_deCOase"/>
</dbReference>
<dbReference type="NCBIfam" id="TIGR01464">
    <property type="entry name" value="hemE"/>
    <property type="match status" value="1"/>
</dbReference>
<dbReference type="PANTHER" id="PTHR21091">
    <property type="entry name" value="METHYLTETRAHYDROFOLATE:HOMOCYSTEINE METHYLTRANSFERASE RELATED"/>
    <property type="match status" value="1"/>
</dbReference>
<dbReference type="PANTHER" id="PTHR21091:SF169">
    <property type="entry name" value="UROPORPHYRINOGEN DECARBOXYLASE"/>
    <property type="match status" value="1"/>
</dbReference>
<dbReference type="Pfam" id="PF01208">
    <property type="entry name" value="URO-D"/>
    <property type="match status" value="1"/>
</dbReference>
<dbReference type="SUPFAM" id="SSF51726">
    <property type="entry name" value="UROD/MetE-like"/>
    <property type="match status" value="1"/>
</dbReference>
<dbReference type="PROSITE" id="PS00906">
    <property type="entry name" value="UROD_1"/>
    <property type="match status" value="1"/>
</dbReference>
<dbReference type="PROSITE" id="PS00907">
    <property type="entry name" value="UROD_2"/>
    <property type="match status" value="1"/>
</dbReference>
<feature type="chain" id="PRO_0000325627" description="Uroporphyrinogen decarboxylase">
    <location>
        <begin position="1"/>
        <end position="352"/>
    </location>
</feature>
<feature type="binding site" evidence="1">
    <location>
        <begin position="29"/>
        <end position="33"/>
    </location>
    <ligand>
        <name>substrate</name>
    </ligand>
</feature>
<feature type="binding site" evidence="1">
    <location>
        <position position="48"/>
    </location>
    <ligand>
        <name>substrate</name>
    </ligand>
</feature>
<feature type="binding site" evidence="1">
    <location>
        <position position="78"/>
    </location>
    <ligand>
        <name>substrate</name>
    </ligand>
</feature>
<feature type="binding site" evidence="1">
    <location>
        <position position="154"/>
    </location>
    <ligand>
        <name>substrate</name>
    </ligand>
</feature>
<feature type="binding site" evidence="1">
    <location>
        <position position="209"/>
    </location>
    <ligand>
        <name>substrate</name>
    </ligand>
</feature>
<feature type="binding site" evidence="1">
    <location>
        <position position="322"/>
    </location>
    <ligand>
        <name>substrate</name>
    </ligand>
</feature>
<feature type="site" description="Transition state stabilizer" evidence="1">
    <location>
        <position position="78"/>
    </location>
</feature>
<protein>
    <recommendedName>
        <fullName evidence="1">Uroporphyrinogen decarboxylase</fullName>
        <shortName evidence="1">UPD</shortName>
        <shortName evidence="1">URO-D</shortName>
        <ecNumber evidence="1">4.1.1.37</ecNumber>
    </recommendedName>
</protein>
<sequence>MGKTKAFNDTFLKACKGEKTDHVPAWYMRQAGRSQPEYRALKEKYGLFEITHQPELCAYVTRLPVEQYGVDAAILYKDIMTPLPAIGVDVEIKNGIGPVIDSPIRTKADIERLGELHPEEDLPYVLDTIQLLTKEQLNVPLIGFAGAPFTMASYMIEGGPSKNYHKTKALMYSEPETWMLLMNKLADMTITYIRAQVKAGVSAFQIFDSWVGALNAADYRTFIKPVMQRIFTELKSENVPMIMYGVGASHLVKDWHDLPLDVVGLDWRMSVDEARKEGLTKTLQGNLDPTILLSPWEVIEERAKDILDQGMKSDHFIFNLGHGVFPDVSPDTLKKLTDFIHDYSAKHKKSSI</sequence>
<evidence type="ECO:0000255" key="1">
    <source>
        <dbReference type="HAMAP-Rule" id="MF_00218"/>
    </source>
</evidence>
<comment type="function">
    <text evidence="1">Catalyzes the decarboxylation of four acetate groups of uroporphyrinogen-III to yield coproporphyrinogen-III.</text>
</comment>
<comment type="catalytic activity">
    <reaction evidence="1">
        <text>uroporphyrinogen III + 4 H(+) = coproporphyrinogen III + 4 CO2</text>
        <dbReference type="Rhea" id="RHEA:19865"/>
        <dbReference type="ChEBI" id="CHEBI:15378"/>
        <dbReference type="ChEBI" id="CHEBI:16526"/>
        <dbReference type="ChEBI" id="CHEBI:57308"/>
        <dbReference type="ChEBI" id="CHEBI:57309"/>
        <dbReference type="EC" id="4.1.1.37"/>
    </reaction>
</comment>
<comment type="pathway">
    <text evidence="1">Porphyrin-containing compound metabolism; protoporphyrin-IX biosynthesis; coproporphyrinogen-III from 5-aminolevulinate: step 4/4.</text>
</comment>
<comment type="subunit">
    <text evidence="1">Homodimer.</text>
</comment>
<comment type="subcellular location">
    <subcellularLocation>
        <location evidence="1">Cytoplasm</location>
    </subcellularLocation>
</comment>
<comment type="similarity">
    <text evidence="1">Belongs to the uroporphyrinogen decarboxylase family.</text>
</comment>
<accession>A8FBM5</accession>
<keyword id="KW-0963">Cytoplasm</keyword>
<keyword id="KW-0210">Decarboxylase</keyword>
<keyword id="KW-0456">Lyase</keyword>
<keyword id="KW-0627">Porphyrin biosynthesis</keyword>
<gene>
    <name evidence="1" type="primary">hemE</name>
    <name type="ordered locus">BPUM_0958</name>
</gene>
<proteinExistence type="inferred from homology"/>
<name>DCUP_BACP2</name>
<reference key="1">
    <citation type="journal article" date="2007" name="PLoS ONE">
        <title>Paradoxical DNA repair and peroxide resistance gene conservation in Bacillus pumilus SAFR-032.</title>
        <authorList>
            <person name="Gioia J."/>
            <person name="Yerrapragada S."/>
            <person name="Qin X."/>
            <person name="Jiang H."/>
            <person name="Igboeli O.C."/>
            <person name="Muzny D."/>
            <person name="Dugan-Rocha S."/>
            <person name="Ding Y."/>
            <person name="Hawes A."/>
            <person name="Liu W."/>
            <person name="Perez L."/>
            <person name="Kovar C."/>
            <person name="Dinh H."/>
            <person name="Lee S."/>
            <person name="Nazareth L."/>
            <person name="Blyth P."/>
            <person name="Holder M."/>
            <person name="Buhay C."/>
            <person name="Tirumalai M.R."/>
            <person name="Liu Y."/>
            <person name="Dasgupta I."/>
            <person name="Bokhetache L."/>
            <person name="Fujita M."/>
            <person name="Karouia F."/>
            <person name="Eswara Moorthy P."/>
            <person name="Siefert J."/>
            <person name="Uzman A."/>
            <person name="Buzumbo P."/>
            <person name="Verma A."/>
            <person name="Zwiya H."/>
            <person name="McWilliams B.D."/>
            <person name="Olowu A."/>
            <person name="Clinkenbeard K.D."/>
            <person name="Newcombe D."/>
            <person name="Golebiewski L."/>
            <person name="Petrosino J.F."/>
            <person name="Nicholson W.L."/>
            <person name="Fox G.E."/>
            <person name="Venkateswaran K."/>
            <person name="Highlander S.K."/>
            <person name="Weinstock G.M."/>
        </authorList>
    </citation>
    <scope>NUCLEOTIDE SEQUENCE [LARGE SCALE GENOMIC DNA]</scope>
    <source>
        <strain>SAFR-032</strain>
    </source>
</reference>
<organism>
    <name type="scientific">Bacillus pumilus (strain SAFR-032)</name>
    <dbReference type="NCBI Taxonomy" id="315750"/>
    <lineage>
        <taxon>Bacteria</taxon>
        <taxon>Bacillati</taxon>
        <taxon>Bacillota</taxon>
        <taxon>Bacilli</taxon>
        <taxon>Bacillales</taxon>
        <taxon>Bacillaceae</taxon>
        <taxon>Bacillus</taxon>
    </lineage>
</organism>